<sequence length="150" mass="16305">MSNPQVAKVFLGVDYGERRIGLAYAAYPLGISLPIGFIATGKTLEATAKLLVGIIQERRVSTVVLGNPLPMQKGQKSALQEDILKLSSLLQESCPVEVILWDERLSSAQAERMLKGDCGLSRKKRKGKTDSIAATLILTSFLEHSPRLPS</sequence>
<name>YQGF_CHLAB</name>
<reference key="1">
    <citation type="journal article" date="2005" name="Genome Res.">
        <title>The Chlamydophila abortus genome sequence reveals an array of variable proteins that contribute to interspecies variation.</title>
        <authorList>
            <person name="Thomson N.R."/>
            <person name="Yeats C."/>
            <person name="Bell K."/>
            <person name="Holden M.T.G."/>
            <person name="Bentley S.D."/>
            <person name="Livingstone M."/>
            <person name="Cerdeno-Tarraga A.-M."/>
            <person name="Harris B."/>
            <person name="Doggett J."/>
            <person name="Ormond D."/>
            <person name="Mungall K."/>
            <person name="Clarke K."/>
            <person name="Feltwell T."/>
            <person name="Hance Z."/>
            <person name="Sanders M."/>
            <person name="Quail M.A."/>
            <person name="Price C."/>
            <person name="Barrell B.G."/>
            <person name="Parkhill J."/>
            <person name="Longbottom D."/>
        </authorList>
    </citation>
    <scope>NUCLEOTIDE SEQUENCE [LARGE SCALE GENOMIC DNA]</scope>
    <source>
        <strain>DSM 27085 / S26/3</strain>
    </source>
</reference>
<gene>
    <name type="ordered locus">CAB571</name>
</gene>
<comment type="function">
    <text evidence="1">Could be a nuclease involved in processing of the 5'-end of pre-16S rRNA.</text>
</comment>
<comment type="subcellular location">
    <subcellularLocation>
        <location evidence="1">Cytoplasm</location>
    </subcellularLocation>
</comment>
<comment type="similarity">
    <text evidence="1">Belongs to the YqgF nuclease family.</text>
</comment>
<protein>
    <recommendedName>
        <fullName evidence="1">Putative pre-16S rRNA nuclease</fullName>
        <ecNumber evidence="1">3.1.-.-</ecNumber>
    </recommendedName>
</protein>
<dbReference type="EC" id="3.1.-.-" evidence="1"/>
<dbReference type="EMBL" id="CR848038">
    <property type="protein sequence ID" value="CAH64019.1"/>
    <property type="molecule type" value="Genomic_DNA"/>
</dbReference>
<dbReference type="SMR" id="Q5L5S0"/>
<dbReference type="KEGG" id="cab:CAB571"/>
<dbReference type="eggNOG" id="COG0816">
    <property type="taxonomic scope" value="Bacteria"/>
</dbReference>
<dbReference type="HOGENOM" id="CLU_098240_1_1_0"/>
<dbReference type="OrthoDB" id="9796140at2"/>
<dbReference type="Proteomes" id="UP000001012">
    <property type="component" value="Chromosome"/>
</dbReference>
<dbReference type="GO" id="GO:0005829">
    <property type="term" value="C:cytosol"/>
    <property type="evidence" value="ECO:0007669"/>
    <property type="project" value="TreeGrafter"/>
</dbReference>
<dbReference type="GO" id="GO:0004518">
    <property type="term" value="F:nuclease activity"/>
    <property type="evidence" value="ECO:0007669"/>
    <property type="project" value="UniProtKB-KW"/>
</dbReference>
<dbReference type="GO" id="GO:0000967">
    <property type="term" value="P:rRNA 5'-end processing"/>
    <property type="evidence" value="ECO:0007669"/>
    <property type="project" value="UniProtKB-UniRule"/>
</dbReference>
<dbReference type="CDD" id="cd16964">
    <property type="entry name" value="YqgF"/>
    <property type="match status" value="1"/>
</dbReference>
<dbReference type="Gene3D" id="3.30.420.140">
    <property type="entry name" value="YqgF/RNase H-like domain"/>
    <property type="match status" value="1"/>
</dbReference>
<dbReference type="HAMAP" id="MF_00651">
    <property type="entry name" value="Nuclease_YqgF"/>
    <property type="match status" value="1"/>
</dbReference>
<dbReference type="InterPro" id="IPR012337">
    <property type="entry name" value="RNaseH-like_sf"/>
</dbReference>
<dbReference type="InterPro" id="IPR005227">
    <property type="entry name" value="YqgF"/>
</dbReference>
<dbReference type="InterPro" id="IPR006641">
    <property type="entry name" value="YqgF/RNaseH-like_dom"/>
</dbReference>
<dbReference type="InterPro" id="IPR037027">
    <property type="entry name" value="YqgF/RNaseH-like_dom_sf"/>
</dbReference>
<dbReference type="NCBIfam" id="TIGR00250">
    <property type="entry name" value="RNAse_H_YqgF"/>
    <property type="match status" value="1"/>
</dbReference>
<dbReference type="PANTHER" id="PTHR33317">
    <property type="entry name" value="POLYNUCLEOTIDYL TRANSFERASE, RIBONUCLEASE H-LIKE SUPERFAMILY PROTEIN"/>
    <property type="match status" value="1"/>
</dbReference>
<dbReference type="PANTHER" id="PTHR33317:SF4">
    <property type="entry name" value="POLYNUCLEOTIDYL TRANSFERASE, RIBONUCLEASE H-LIKE SUPERFAMILY PROTEIN"/>
    <property type="match status" value="1"/>
</dbReference>
<dbReference type="Pfam" id="PF03652">
    <property type="entry name" value="RuvX"/>
    <property type="match status" value="1"/>
</dbReference>
<dbReference type="SMART" id="SM00732">
    <property type="entry name" value="YqgFc"/>
    <property type="match status" value="1"/>
</dbReference>
<dbReference type="SUPFAM" id="SSF53098">
    <property type="entry name" value="Ribonuclease H-like"/>
    <property type="match status" value="1"/>
</dbReference>
<evidence type="ECO:0000255" key="1">
    <source>
        <dbReference type="HAMAP-Rule" id="MF_00651"/>
    </source>
</evidence>
<keyword id="KW-0963">Cytoplasm</keyword>
<keyword id="KW-0378">Hydrolase</keyword>
<keyword id="KW-0540">Nuclease</keyword>
<keyword id="KW-0690">Ribosome biogenesis</keyword>
<organism>
    <name type="scientific">Chlamydia abortus (strain DSM 27085 / S26/3)</name>
    <name type="common">Chlamydophila abortus</name>
    <dbReference type="NCBI Taxonomy" id="218497"/>
    <lineage>
        <taxon>Bacteria</taxon>
        <taxon>Pseudomonadati</taxon>
        <taxon>Chlamydiota</taxon>
        <taxon>Chlamydiia</taxon>
        <taxon>Chlamydiales</taxon>
        <taxon>Chlamydiaceae</taxon>
        <taxon>Chlamydia/Chlamydophila group</taxon>
        <taxon>Chlamydia</taxon>
    </lineage>
</organism>
<proteinExistence type="inferred from homology"/>
<accession>Q5L5S0</accession>
<feature type="chain" id="PRO_0000257516" description="Putative pre-16S rRNA nuclease">
    <location>
        <begin position="1"/>
        <end position="150"/>
    </location>
</feature>